<protein>
    <recommendedName>
        <fullName evidence="1">Serine/threonine transporter SstT</fullName>
    </recommendedName>
    <alternativeName>
        <fullName evidence="1">Na(+)/serine-threonine symporter</fullName>
    </alternativeName>
</protein>
<gene>
    <name evidence="1" type="primary">sstT</name>
    <name type="ordered locus">Pput_3251</name>
</gene>
<evidence type="ECO:0000255" key="1">
    <source>
        <dbReference type="HAMAP-Rule" id="MF_01582"/>
    </source>
</evidence>
<accession>A5W5G7</accession>
<dbReference type="EMBL" id="CP000712">
    <property type="protein sequence ID" value="ABQ79377.1"/>
    <property type="molecule type" value="Genomic_DNA"/>
</dbReference>
<dbReference type="SMR" id="A5W5G7"/>
<dbReference type="KEGG" id="ppf:Pput_3251"/>
<dbReference type="eggNOG" id="COG3633">
    <property type="taxonomic scope" value="Bacteria"/>
</dbReference>
<dbReference type="HOGENOM" id="CLU_044581_0_0_6"/>
<dbReference type="GO" id="GO:0005886">
    <property type="term" value="C:plasma membrane"/>
    <property type="evidence" value="ECO:0007669"/>
    <property type="project" value="UniProtKB-SubCell"/>
</dbReference>
<dbReference type="GO" id="GO:0005295">
    <property type="term" value="F:neutral L-amino acid:sodium symporter activity"/>
    <property type="evidence" value="ECO:0007669"/>
    <property type="project" value="TreeGrafter"/>
</dbReference>
<dbReference type="GO" id="GO:0032329">
    <property type="term" value="P:serine transport"/>
    <property type="evidence" value="ECO:0007669"/>
    <property type="project" value="InterPro"/>
</dbReference>
<dbReference type="GO" id="GO:0015826">
    <property type="term" value="P:threonine transport"/>
    <property type="evidence" value="ECO:0007669"/>
    <property type="project" value="InterPro"/>
</dbReference>
<dbReference type="FunFam" id="1.10.3860.10:FF:000003">
    <property type="entry name" value="Serine/threonine transporter sstT"/>
    <property type="match status" value="1"/>
</dbReference>
<dbReference type="Gene3D" id="1.10.3860.10">
    <property type="entry name" value="Sodium:dicarboxylate symporter"/>
    <property type="match status" value="1"/>
</dbReference>
<dbReference type="HAMAP" id="MF_01582">
    <property type="entry name" value="Ser_Thr_transp_SstT"/>
    <property type="match status" value="1"/>
</dbReference>
<dbReference type="InterPro" id="IPR001991">
    <property type="entry name" value="Na-dicarboxylate_symporter"/>
</dbReference>
<dbReference type="InterPro" id="IPR036458">
    <property type="entry name" value="Na:dicarbo_symporter_sf"/>
</dbReference>
<dbReference type="InterPro" id="IPR023025">
    <property type="entry name" value="Ser_Thr_transp_SstT"/>
</dbReference>
<dbReference type="NCBIfam" id="NF010151">
    <property type="entry name" value="PRK13628.1"/>
    <property type="match status" value="1"/>
</dbReference>
<dbReference type="PANTHER" id="PTHR42865">
    <property type="entry name" value="PROTON/GLUTAMATE-ASPARTATE SYMPORTER"/>
    <property type="match status" value="1"/>
</dbReference>
<dbReference type="PANTHER" id="PTHR42865:SF8">
    <property type="entry name" value="SERINE_THREONINE TRANSPORTER SSTT"/>
    <property type="match status" value="1"/>
</dbReference>
<dbReference type="Pfam" id="PF00375">
    <property type="entry name" value="SDF"/>
    <property type="match status" value="1"/>
</dbReference>
<dbReference type="PRINTS" id="PR00173">
    <property type="entry name" value="EDTRNSPORT"/>
</dbReference>
<dbReference type="SUPFAM" id="SSF118215">
    <property type="entry name" value="Proton glutamate symport protein"/>
    <property type="match status" value="1"/>
</dbReference>
<feature type="chain" id="PRO_1000069286" description="Serine/threonine transporter SstT">
    <location>
        <begin position="1"/>
        <end position="403"/>
    </location>
</feature>
<feature type="transmembrane region" description="Helical" evidence="1">
    <location>
        <begin position="14"/>
        <end position="34"/>
    </location>
</feature>
<feature type="transmembrane region" description="Helical" evidence="1">
    <location>
        <begin position="44"/>
        <end position="64"/>
    </location>
</feature>
<feature type="transmembrane region" description="Helical" evidence="1">
    <location>
        <begin position="79"/>
        <end position="99"/>
    </location>
</feature>
<feature type="transmembrane region" description="Helical" evidence="1">
    <location>
        <begin position="138"/>
        <end position="158"/>
    </location>
</feature>
<feature type="transmembrane region" description="Helical" evidence="1">
    <location>
        <begin position="175"/>
        <end position="195"/>
    </location>
</feature>
<feature type="transmembrane region" description="Helical" evidence="1">
    <location>
        <begin position="214"/>
        <end position="234"/>
    </location>
</feature>
<feature type="transmembrane region" description="Helical" evidence="1">
    <location>
        <begin position="295"/>
        <end position="315"/>
    </location>
</feature>
<feature type="transmembrane region" description="Helical" evidence="1">
    <location>
        <begin position="327"/>
        <end position="347"/>
    </location>
</feature>
<feature type="transmembrane region" description="Helical" evidence="1">
    <location>
        <begin position="353"/>
        <end position="373"/>
    </location>
</feature>
<comment type="function">
    <text evidence="1">Involved in the import of serine and threonine into the cell, with the concomitant import of sodium (symport system).</text>
</comment>
<comment type="catalytic activity">
    <reaction evidence="1">
        <text>L-serine(in) + Na(+)(in) = L-serine(out) + Na(+)(out)</text>
        <dbReference type="Rhea" id="RHEA:29575"/>
        <dbReference type="ChEBI" id="CHEBI:29101"/>
        <dbReference type="ChEBI" id="CHEBI:33384"/>
    </reaction>
    <physiologicalReaction direction="right-to-left" evidence="1">
        <dbReference type="Rhea" id="RHEA:29577"/>
    </physiologicalReaction>
</comment>
<comment type="catalytic activity">
    <reaction evidence="1">
        <text>L-threonine(in) + Na(+)(in) = L-threonine(out) + Na(+)(out)</text>
        <dbReference type="Rhea" id="RHEA:69999"/>
        <dbReference type="ChEBI" id="CHEBI:29101"/>
        <dbReference type="ChEBI" id="CHEBI:57926"/>
    </reaction>
    <physiologicalReaction direction="right-to-left" evidence="1">
        <dbReference type="Rhea" id="RHEA:70001"/>
    </physiologicalReaction>
</comment>
<comment type="subcellular location">
    <subcellularLocation>
        <location evidence="1">Cell inner membrane</location>
        <topology evidence="1">Multi-pass membrane protein</topology>
    </subcellularLocation>
</comment>
<comment type="similarity">
    <text evidence="1">Belongs to the dicarboxylate/amino acid:cation symporter (DAACS) (TC 2.A.23) family.</text>
</comment>
<sequence length="403" mass="41918">MTPLLRFLNRTSLVTQIVIGLLAGIALALLAPAIARDLAFLGKVFVSALKAVAPVLVFILVMASVANHRHGQETHIRPILWLYLLGTFAAAVVAVVASMLFPSHLALSTSEASLSAPGGITEVLQNLLLSAVDNPVNALLNANFIGVLTWAIGLGVALRHAGETTRTVVEDLSTGVTLIVRVVIRFAPLGIFGLVSSTLAQSGLDALLGYLHLLAVLIGCMLFVALVMNPLIVFWKIRRNPYPLTLLCLRESGITAFFTRSSAANIPVNLALSERLGLHEDTYSVSIPLGATINMAGAAITITVLTLAAVHTLGIQVDLPTAVLLSVVAAVCACGASGVAGGSLLLIPLACSLFGIPSEIAMQVVAVGFIIGVLQDSAETALNSSTDVLFTAAACQAKEQRNG</sequence>
<organism>
    <name type="scientific">Pseudomonas putida (strain ATCC 700007 / DSM 6899 / JCM 31910 / BCRC 17059 / LMG 24140 / F1)</name>
    <dbReference type="NCBI Taxonomy" id="351746"/>
    <lineage>
        <taxon>Bacteria</taxon>
        <taxon>Pseudomonadati</taxon>
        <taxon>Pseudomonadota</taxon>
        <taxon>Gammaproteobacteria</taxon>
        <taxon>Pseudomonadales</taxon>
        <taxon>Pseudomonadaceae</taxon>
        <taxon>Pseudomonas</taxon>
    </lineage>
</organism>
<reference key="1">
    <citation type="submission" date="2007-05" db="EMBL/GenBank/DDBJ databases">
        <title>Complete sequence of Pseudomonas putida F1.</title>
        <authorList>
            <consortium name="US DOE Joint Genome Institute"/>
            <person name="Copeland A."/>
            <person name="Lucas S."/>
            <person name="Lapidus A."/>
            <person name="Barry K."/>
            <person name="Detter J.C."/>
            <person name="Glavina del Rio T."/>
            <person name="Hammon N."/>
            <person name="Israni S."/>
            <person name="Dalin E."/>
            <person name="Tice H."/>
            <person name="Pitluck S."/>
            <person name="Chain P."/>
            <person name="Malfatti S."/>
            <person name="Shin M."/>
            <person name="Vergez L."/>
            <person name="Schmutz J."/>
            <person name="Larimer F."/>
            <person name="Land M."/>
            <person name="Hauser L."/>
            <person name="Kyrpides N."/>
            <person name="Lykidis A."/>
            <person name="Parales R."/>
            <person name="Richardson P."/>
        </authorList>
    </citation>
    <scope>NUCLEOTIDE SEQUENCE [LARGE SCALE GENOMIC DNA]</scope>
    <source>
        <strain>ATCC 700007 / DSM 6899 / JCM 31910 / BCRC 17059 / LMG 24140 / F1</strain>
    </source>
</reference>
<keyword id="KW-0029">Amino-acid transport</keyword>
<keyword id="KW-0997">Cell inner membrane</keyword>
<keyword id="KW-1003">Cell membrane</keyword>
<keyword id="KW-0472">Membrane</keyword>
<keyword id="KW-0769">Symport</keyword>
<keyword id="KW-0812">Transmembrane</keyword>
<keyword id="KW-1133">Transmembrane helix</keyword>
<keyword id="KW-0813">Transport</keyword>
<proteinExistence type="inferred from homology"/>
<name>SSTT_PSEP1</name>